<gene>
    <name type="primary">pgk</name>
</gene>
<comment type="catalytic activity">
    <reaction>
        <text>(2R)-3-phosphoglycerate + ATP = (2R)-3-phospho-glyceroyl phosphate + ADP</text>
        <dbReference type="Rhea" id="RHEA:14801"/>
        <dbReference type="ChEBI" id="CHEBI:30616"/>
        <dbReference type="ChEBI" id="CHEBI:57604"/>
        <dbReference type="ChEBI" id="CHEBI:58272"/>
        <dbReference type="ChEBI" id="CHEBI:456216"/>
        <dbReference type="EC" id="2.7.2.3"/>
    </reaction>
</comment>
<comment type="pathway">
    <text>Carbohydrate degradation; glycolysis; pyruvate from D-glyceraldehyde 3-phosphate: step 2/5.</text>
</comment>
<comment type="subcellular location">
    <subcellularLocation>
        <location>Cytoplasm</location>
    </subcellularLocation>
</comment>
<comment type="similarity">
    <text evidence="2">Belongs to the phosphoglycerate kinase family.</text>
</comment>
<keyword id="KW-0067">ATP-binding</keyword>
<keyword id="KW-0963">Cytoplasm</keyword>
<keyword id="KW-0324">Glycolysis</keyword>
<keyword id="KW-0418">Kinase</keyword>
<keyword id="KW-0547">Nucleotide-binding</keyword>
<keyword id="KW-0808">Transferase</keyword>
<evidence type="ECO:0000250" key="1"/>
<evidence type="ECO:0000305" key="2"/>
<organism>
    <name type="scientific">Lactobacillus delbrueckii subsp. bulgaricus</name>
    <dbReference type="NCBI Taxonomy" id="1585"/>
    <lineage>
        <taxon>Bacteria</taxon>
        <taxon>Bacillati</taxon>
        <taxon>Bacillota</taxon>
        <taxon>Bacilli</taxon>
        <taxon>Lactobacillales</taxon>
        <taxon>Lactobacillaceae</taxon>
        <taxon>Lactobacillus</taxon>
    </lineage>
</organism>
<sequence>MAKLIVSDVDVKDKKVLVRVDFNVPIKDGVIGDDNRIVAALPTIKYIIENGGKAILLSHLGRIKSDEDKKSLSLAPVAKRLGELLEKPVTFVPSNEGKEVEDAINNMKDGDVVVLENTRFQDIDNDFGKRESKNDPKLGEYWASLGDVFVNDAFGTAHRSHASNVGIATAMKAAGKPAAAGFLLEKEIKFLGNAVANPVHPFVTILGGAKVSDKIGVITNLIPKADHIIIGGGMAYTFLKAQGHNIGKSLVEDDKVEFAKELLEKAGDKLVLPIDNVAATEFNNDAASEVVGQDIPDNEMGLDIGPKTIELFKKTLEGAKTVVWNGPMGVFEMPNFAKGTLEVGRALADLPDATTIVGGGDSTAAAKQLGIAPKLTHISTGGGASLEYLEGKELPGIACVSDK</sequence>
<name>PGK_LACDE</name>
<feature type="chain" id="PRO_0000145952" description="Phosphoglycerate kinase">
    <location>
        <begin position="1"/>
        <end position="403"/>
    </location>
</feature>
<feature type="binding site" evidence="1">
    <location>
        <begin position="21"/>
        <end position="23"/>
    </location>
    <ligand>
        <name>substrate</name>
    </ligand>
</feature>
<feature type="binding site" evidence="1">
    <location>
        <position position="36"/>
    </location>
    <ligand>
        <name>substrate</name>
    </ligand>
</feature>
<feature type="binding site" evidence="1">
    <location>
        <begin position="59"/>
        <end position="62"/>
    </location>
    <ligand>
        <name>substrate</name>
    </ligand>
</feature>
<feature type="binding site" evidence="1">
    <location>
        <position position="119"/>
    </location>
    <ligand>
        <name>substrate</name>
    </ligand>
</feature>
<feature type="binding site" evidence="1">
    <location>
        <position position="159"/>
    </location>
    <ligand>
        <name>substrate</name>
    </ligand>
</feature>
<feature type="binding site" evidence="1">
    <location>
        <position position="214"/>
    </location>
    <ligand>
        <name>ATP</name>
        <dbReference type="ChEBI" id="CHEBI:30616"/>
    </ligand>
</feature>
<feature type="binding site" evidence="1">
    <location>
        <position position="301"/>
    </location>
    <ligand>
        <name>ATP</name>
        <dbReference type="ChEBI" id="CHEBI:30616"/>
    </ligand>
</feature>
<feature type="binding site" evidence="1">
    <location>
        <position position="332"/>
    </location>
    <ligand>
        <name>ATP</name>
        <dbReference type="ChEBI" id="CHEBI:30616"/>
    </ligand>
</feature>
<feature type="binding site" evidence="1">
    <location>
        <begin position="359"/>
        <end position="362"/>
    </location>
    <ligand>
        <name>ATP</name>
        <dbReference type="ChEBI" id="CHEBI:30616"/>
    </ligand>
</feature>
<dbReference type="EC" id="2.7.2.3"/>
<dbReference type="EMBL" id="AJ000339">
    <property type="protein sequence ID" value="CAA04015.1"/>
    <property type="molecule type" value="Genomic_DNA"/>
</dbReference>
<dbReference type="PIR" id="T09634">
    <property type="entry name" value="T09634"/>
</dbReference>
<dbReference type="RefSeq" id="WP_003618962.1">
    <property type="nucleotide sequence ID" value="NZ_RIST01000003.1"/>
</dbReference>
<dbReference type="SMR" id="O32756"/>
<dbReference type="OMA" id="DMIFDIG"/>
<dbReference type="BioCyc" id="MetaCyc:MONOMER-13053"/>
<dbReference type="UniPathway" id="UPA00109">
    <property type="reaction ID" value="UER00185"/>
</dbReference>
<dbReference type="GO" id="GO:0005829">
    <property type="term" value="C:cytosol"/>
    <property type="evidence" value="ECO:0007669"/>
    <property type="project" value="TreeGrafter"/>
</dbReference>
<dbReference type="GO" id="GO:0043531">
    <property type="term" value="F:ADP binding"/>
    <property type="evidence" value="ECO:0007669"/>
    <property type="project" value="TreeGrafter"/>
</dbReference>
<dbReference type="GO" id="GO:0005524">
    <property type="term" value="F:ATP binding"/>
    <property type="evidence" value="ECO:0007669"/>
    <property type="project" value="UniProtKB-KW"/>
</dbReference>
<dbReference type="GO" id="GO:0004618">
    <property type="term" value="F:phosphoglycerate kinase activity"/>
    <property type="evidence" value="ECO:0007669"/>
    <property type="project" value="UniProtKB-UniRule"/>
</dbReference>
<dbReference type="GO" id="GO:0006094">
    <property type="term" value="P:gluconeogenesis"/>
    <property type="evidence" value="ECO:0007669"/>
    <property type="project" value="TreeGrafter"/>
</dbReference>
<dbReference type="GO" id="GO:0006096">
    <property type="term" value="P:glycolytic process"/>
    <property type="evidence" value="ECO:0007669"/>
    <property type="project" value="UniProtKB-UniRule"/>
</dbReference>
<dbReference type="CDD" id="cd00318">
    <property type="entry name" value="Phosphoglycerate_kinase"/>
    <property type="match status" value="1"/>
</dbReference>
<dbReference type="FunFam" id="3.40.50.1260:FF:000001">
    <property type="entry name" value="Phosphoglycerate kinase"/>
    <property type="match status" value="1"/>
</dbReference>
<dbReference type="FunFam" id="3.40.50.1260:FF:000008">
    <property type="entry name" value="Phosphoglycerate kinase"/>
    <property type="match status" value="1"/>
</dbReference>
<dbReference type="Gene3D" id="3.40.50.1260">
    <property type="entry name" value="Phosphoglycerate kinase, N-terminal domain"/>
    <property type="match status" value="2"/>
</dbReference>
<dbReference type="HAMAP" id="MF_00145">
    <property type="entry name" value="Phosphoglyc_kinase"/>
    <property type="match status" value="1"/>
</dbReference>
<dbReference type="InterPro" id="IPR001576">
    <property type="entry name" value="Phosphoglycerate_kinase"/>
</dbReference>
<dbReference type="InterPro" id="IPR015911">
    <property type="entry name" value="Phosphoglycerate_kinase_CS"/>
</dbReference>
<dbReference type="InterPro" id="IPR015824">
    <property type="entry name" value="Phosphoglycerate_kinase_N"/>
</dbReference>
<dbReference type="InterPro" id="IPR036043">
    <property type="entry name" value="Phosphoglycerate_kinase_sf"/>
</dbReference>
<dbReference type="PANTHER" id="PTHR11406">
    <property type="entry name" value="PHOSPHOGLYCERATE KINASE"/>
    <property type="match status" value="1"/>
</dbReference>
<dbReference type="PANTHER" id="PTHR11406:SF23">
    <property type="entry name" value="PHOSPHOGLYCERATE KINASE 1, CHLOROPLASTIC-RELATED"/>
    <property type="match status" value="1"/>
</dbReference>
<dbReference type="Pfam" id="PF00162">
    <property type="entry name" value="PGK"/>
    <property type="match status" value="1"/>
</dbReference>
<dbReference type="PIRSF" id="PIRSF000724">
    <property type="entry name" value="Pgk"/>
    <property type="match status" value="1"/>
</dbReference>
<dbReference type="PRINTS" id="PR00477">
    <property type="entry name" value="PHGLYCKINASE"/>
</dbReference>
<dbReference type="SUPFAM" id="SSF53748">
    <property type="entry name" value="Phosphoglycerate kinase"/>
    <property type="match status" value="1"/>
</dbReference>
<dbReference type="PROSITE" id="PS00111">
    <property type="entry name" value="PGLYCERATE_KINASE"/>
    <property type="match status" value="1"/>
</dbReference>
<protein>
    <recommendedName>
        <fullName>Phosphoglycerate kinase</fullName>
        <ecNumber>2.7.2.3</ecNumber>
    </recommendedName>
</protein>
<proteinExistence type="inferred from homology"/>
<accession>O32756</accession>
<reference key="1">
    <citation type="journal article" date="1998" name="Microbiology">
        <title>An operon encoding three glycolytic enzymes in Lactobacillus delbrueckii subsp. bulgaricus: glyceraldehyde-3-phosphate dehydrogenase, phosphoglycerate kinase and triosephosphate isomerase.</title>
        <authorList>
            <person name="Branny P."/>
            <person name="Delatorre F."/>
            <person name="Garel J.R."/>
        </authorList>
    </citation>
    <scope>NUCLEOTIDE SEQUENCE [GENOMIC DNA]</scope>
    <source>
        <strain>B107</strain>
    </source>
</reference>